<organism>
    <name type="scientific">Jasminum nudiflorum</name>
    <name type="common">Winter jasmine</name>
    <dbReference type="NCBI Taxonomy" id="126431"/>
    <lineage>
        <taxon>Eukaryota</taxon>
        <taxon>Viridiplantae</taxon>
        <taxon>Streptophyta</taxon>
        <taxon>Embryophyta</taxon>
        <taxon>Tracheophyta</taxon>
        <taxon>Spermatophyta</taxon>
        <taxon>Magnoliopsida</taxon>
        <taxon>eudicotyledons</taxon>
        <taxon>Gunneridae</taxon>
        <taxon>Pentapetalae</taxon>
        <taxon>asterids</taxon>
        <taxon>lamiids</taxon>
        <taxon>Lamiales</taxon>
        <taxon>Oleaceae</taxon>
        <taxon>Jasmineae</taxon>
        <taxon>Jasminum</taxon>
    </lineage>
</organism>
<keyword id="KW-0150">Chloroplast</keyword>
<keyword id="KW-0934">Plastid</keyword>
<keyword id="KW-0687">Ribonucleoprotein</keyword>
<keyword id="KW-0689">Ribosomal protein</keyword>
<keyword id="KW-0694">RNA-binding</keyword>
<keyword id="KW-0699">rRNA-binding</keyword>
<dbReference type="EMBL" id="DQ673255">
    <property type="protein sequence ID" value="ABG74663.1"/>
    <property type="molecule type" value="Genomic_DNA"/>
</dbReference>
<dbReference type="RefSeq" id="YP_778526.1">
    <property type="nucleotide sequence ID" value="NC_008407.1"/>
</dbReference>
<dbReference type="SMR" id="Q06R95"/>
<dbReference type="GeneID" id="4319791"/>
<dbReference type="GO" id="GO:0009507">
    <property type="term" value="C:chloroplast"/>
    <property type="evidence" value="ECO:0007669"/>
    <property type="project" value="UniProtKB-SubCell"/>
</dbReference>
<dbReference type="GO" id="GO:0022625">
    <property type="term" value="C:cytosolic large ribosomal subunit"/>
    <property type="evidence" value="ECO:0007669"/>
    <property type="project" value="TreeGrafter"/>
</dbReference>
<dbReference type="GO" id="GO:0070180">
    <property type="term" value="F:large ribosomal subunit rRNA binding"/>
    <property type="evidence" value="ECO:0007669"/>
    <property type="project" value="TreeGrafter"/>
</dbReference>
<dbReference type="GO" id="GO:0003735">
    <property type="term" value="F:structural constituent of ribosome"/>
    <property type="evidence" value="ECO:0007669"/>
    <property type="project" value="InterPro"/>
</dbReference>
<dbReference type="GO" id="GO:0006412">
    <property type="term" value="P:translation"/>
    <property type="evidence" value="ECO:0007669"/>
    <property type="project" value="UniProtKB-UniRule"/>
</dbReference>
<dbReference type="CDD" id="cd00337">
    <property type="entry name" value="Ribosomal_uL14"/>
    <property type="match status" value="1"/>
</dbReference>
<dbReference type="FunFam" id="2.40.150.20:FF:000002">
    <property type="entry name" value="50S ribosomal protein L14, chloroplastic"/>
    <property type="match status" value="1"/>
</dbReference>
<dbReference type="Gene3D" id="2.40.150.20">
    <property type="entry name" value="Ribosomal protein L14"/>
    <property type="match status" value="1"/>
</dbReference>
<dbReference type="HAMAP" id="MF_01367">
    <property type="entry name" value="Ribosomal_uL14"/>
    <property type="match status" value="1"/>
</dbReference>
<dbReference type="InterPro" id="IPR000218">
    <property type="entry name" value="Ribosomal_uL14"/>
</dbReference>
<dbReference type="InterPro" id="IPR005745">
    <property type="entry name" value="Ribosomal_uL14_bac-type"/>
</dbReference>
<dbReference type="InterPro" id="IPR036853">
    <property type="entry name" value="Ribosomal_uL14_sf"/>
</dbReference>
<dbReference type="NCBIfam" id="TIGR01067">
    <property type="entry name" value="rplN_bact"/>
    <property type="match status" value="1"/>
</dbReference>
<dbReference type="PANTHER" id="PTHR11761">
    <property type="entry name" value="50S/60S RIBOSOMAL PROTEIN L14/L23"/>
    <property type="match status" value="1"/>
</dbReference>
<dbReference type="PANTHER" id="PTHR11761:SF3">
    <property type="entry name" value="LARGE RIBOSOMAL SUBUNIT PROTEIN UL14M"/>
    <property type="match status" value="1"/>
</dbReference>
<dbReference type="Pfam" id="PF00238">
    <property type="entry name" value="Ribosomal_L14"/>
    <property type="match status" value="1"/>
</dbReference>
<dbReference type="SMART" id="SM01374">
    <property type="entry name" value="Ribosomal_L14"/>
    <property type="match status" value="1"/>
</dbReference>
<dbReference type="SUPFAM" id="SSF50193">
    <property type="entry name" value="Ribosomal protein L14"/>
    <property type="match status" value="1"/>
</dbReference>
<comment type="function">
    <text evidence="1">Binds to 23S rRNA.</text>
</comment>
<comment type="subunit">
    <text evidence="1">Part of the 50S ribosomal subunit.</text>
</comment>
<comment type="subcellular location">
    <subcellularLocation>
        <location>Plastid</location>
        <location>Chloroplast</location>
    </subcellularLocation>
</comment>
<comment type="similarity">
    <text evidence="1">Belongs to the universal ribosomal protein uL14 family.</text>
</comment>
<proteinExistence type="inferred from homology"/>
<gene>
    <name evidence="1" type="primary">rpl14</name>
    <name type="ORF">JNC0892</name>
</gene>
<feature type="chain" id="PRO_0000276349" description="Large ribosomal subunit protein uL14c">
    <location>
        <begin position="1"/>
        <end position="122"/>
    </location>
</feature>
<name>RK14_JASNU</name>
<sequence>MIQPQTHLNVADNSGARKLMCIRIIGASNRRYAHIGDVIVAVIKEAVPHMSLEKSEVVRAVIVRTCKELKRDCGMIIRYDDNAAIVIDQKGNPKGSRVFGAIPEELRQFGFTKILSIAPEVL</sequence>
<geneLocation type="chloroplast"/>
<protein>
    <recommendedName>
        <fullName evidence="1">Large ribosomal subunit protein uL14c</fullName>
    </recommendedName>
    <alternativeName>
        <fullName evidence="2">50S ribosomal protein L14, chloroplastic</fullName>
    </alternativeName>
</protein>
<accession>Q06R95</accession>
<evidence type="ECO:0000255" key="1">
    <source>
        <dbReference type="HAMAP-Rule" id="MF_01367"/>
    </source>
</evidence>
<evidence type="ECO:0000305" key="2"/>
<reference key="1">
    <citation type="journal article" date="2007" name="Mol. Biol. Evol.">
        <title>Gene relocations within chloroplast genomes of Jasminum and Menodora (Oleaceae) are due to multiple, overlapping inversions.</title>
        <authorList>
            <person name="Lee H.-L."/>
            <person name="Jansen R.K."/>
            <person name="Chumley T.W."/>
            <person name="Kim K.-J."/>
        </authorList>
    </citation>
    <scope>NUCLEOTIDE SEQUENCE [LARGE SCALE GENOMIC DNA]</scope>
</reference>